<dbReference type="EC" id="2.4.2.64" evidence="1"/>
<dbReference type="EMBL" id="HE600986">
    <property type="protein sequence ID" value="CAP26200.2"/>
    <property type="molecule type" value="Genomic_DNA"/>
</dbReference>
<dbReference type="SMR" id="A8X0P0"/>
<dbReference type="FunCoup" id="A8X0P0">
    <property type="interactions" value="1479"/>
</dbReference>
<dbReference type="STRING" id="6238.A8X0P0"/>
<dbReference type="EnsemblMetazoa" id="CBG06200.1">
    <property type="protein sequence ID" value="CBG06200.1"/>
    <property type="gene ID" value="WBGene00028508"/>
</dbReference>
<dbReference type="WormBase" id="CBG06200">
    <property type="protein sequence ID" value="CBP30542"/>
    <property type="gene ID" value="WBGene00028508"/>
    <property type="gene designation" value="Cbr-tgt-1"/>
</dbReference>
<dbReference type="eggNOG" id="KOG3908">
    <property type="taxonomic scope" value="Eukaryota"/>
</dbReference>
<dbReference type="HOGENOM" id="CLU_022060_0_1_1"/>
<dbReference type="InParanoid" id="A8X0P0"/>
<dbReference type="OMA" id="IDLFDCV"/>
<dbReference type="Proteomes" id="UP000008549">
    <property type="component" value="Unassembled WGS sequence"/>
</dbReference>
<dbReference type="GO" id="GO:0005737">
    <property type="term" value="C:cytoplasm"/>
    <property type="evidence" value="ECO:0007669"/>
    <property type="project" value="UniProtKB-SubCell"/>
</dbReference>
<dbReference type="GO" id="GO:0046872">
    <property type="term" value="F:metal ion binding"/>
    <property type="evidence" value="ECO:0007669"/>
    <property type="project" value="UniProtKB-KW"/>
</dbReference>
<dbReference type="GO" id="GO:0008479">
    <property type="term" value="F:tRNA-guanosine(34) queuine transglycosylase activity"/>
    <property type="evidence" value="ECO:0000318"/>
    <property type="project" value="GO_Central"/>
</dbReference>
<dbReference type="GO" id="GO:0101030">
    <property type="term" value="P:tRNA-guanine transglycosylation"/>
    <property type="evidence" value="ECO:0000318"/>
    <property type="project" value="GO_Central"/>
</dbReference>
<dbReference type="Gene3D" id="3.20.20.105">
    <property type="entry name" value="Queuine tRNA-ribosyltransferase-like"/>
    <property type="match status" value="1"/>
</dbReference>
<dbReference type="HAMAP" id="MF_00168">
    <property type="entry name" value="Q_tRNA_Tgt"/>
    <property type="match status" value="1"/>
</dbReference>
<dbReference type="InterPro" id="IPR004803">
    <property type="entry name" value="TGT"/>
</dbReference>
<dbReference type="InterPro" id="IPR036511">
    <property type="entry name" value="TGT-like_sf"/>
</dbReference>
<dbReference type="InterPro" id="IPR002616">
    <property type="entry name" value="tRNA_ribo_trans-like"/>
</dbReference>
<dbReference type="NCBIfam" id="TIGR00430">
    <property type="entry name" value="Q_tRNA_tgt"/>
    <property type="match status" value="1"/>
</dbReference>
<dbReference type="NCBIfam" id="TIGR00449">
    <property type="entry name" value="tgt_general"/>
    <property type="match status" value="1"/>
</dbReference>
<dbReference type="PANTHER" id="PTHR43530">
    <property type="entry name" value="QUEUINE TRNA-RIBOSYLTRANSFERASE CATALYTIC SUBUNIT 1"/>
    <property type="match status" value="1"/>
</dbReference>
<dbReference type="PANTHER" id="PTHR43530:SF1">
    <property type="entry name" value="QUEUINE TRNA-RIBOSYLTRANSFERASE CATALYTIC SUBUNIT 1"/>
    <property type="match status" value="1"/>
</dbReference>
<dbReference type="Pfam" id="PF01702">
    <property type="entry name" value="TGT"/>
    <property type="match status" value="1"/>
</dbReference>
<dbReference type="SUPFAM" id="SSF51713">
    <property type="entry name" value="tRNA-guanine transglycosylase"/>
    <property type="match status" value="1"/>
</dbReference>
<name>TGT_CAEBR</name>
<proteinExistence type="inferred from homology"/>
<reference key="1">
    <citation type="journal article" date="2003" name="PLoS Biol.">
        <title>The genome sequence of Caenorhabditis briggsae: a platform for comparative genomics.</title>
        <authorList>
            <person name="Stein L.D."/>
            <person name="Bao Z."/>
            <person name="Blasiar D."/>
            <person name="Blumenthal T."/>
            <person name="Brent M.R."/>
            <person name="Chen N."/>
            <person name="Chinwalla A."/>
            <person name="Clarke L."/>
            <person name="Clee C."/>
            <person name="Coghlan A."/>
            <person name="Coulson A."/>
            <person name="D'Eustachio P."/>
            <person name="Fitch D.H.A."/>
            <person name="Fulton L.A."/>
            <person name="Fulton R.E."/>
            <person name="Griffiths-Jones S."/>
            <person name="Harris T.W."/>
            <person name="Hillier L.W."/>
            <person name="Kamath R."/>
            <person name="Kuwabara P.E."/>
            <person name="Mardis E.R."/>
            <person name="Marra M.A."/>
            <person name="Miner T.L."/>
            <person name="Minx P."/>
            <person name="Mullikin J.C."/>
            <person name="Plumb R.W."/>
            <person name="Rogers J."/>
            <person name="Schein J.E."/>
            <person name="Sohrmann M."/>
            <person name="Spieth J."/>
            <person name="Stajich J.E."/>
            <person name="Wei C."/>
            <person name="Willey D."/>
            <person name="Wilson R.K."/>
            <person name="Durbin R.M."/>
            <person name="Waterston R.H."/>
        </authorList>
    </citation>
    <scope>NUCLEOTIDE SEQUENCE [LARGE SCALE GENOMIC DNA]</scope>
    <source>
        <strain>AF16</strain>
    </source>
</reference>
<comment type="function">
    <text evidence="1">Catalytic subunit of the queuine tRNA-ribosyltransferase (TGT) that catalyzes the base-exchange of a guanine (G) residue with queuine (Q) at position 34 (anticodon wobble position) in tRNAs with GU(N) anticodons (tRNA-Asp, -Asn, -His and -Tyr), resulting in the hypermodified nucleoside queuosine (7-(((4,5-cis-dihydroxy-2-cyclopenten-1-yl)amino)methyl)-7-deazaguanosine). Catalysis occurs through a double-displacement mechanism. The nucleophile active site attacks the C1' of nucleotide 34 to detach the guanine base from the RNA, forming a covalent enzyme-RNA intermediate. The proton acceptor active site deprotonates the incoming queuine, allowing a nucleophilic attack on the C1' of the ribose to form the product.</text>
</comment>
<comment type="catalytic activity">
    <reaction evidence="1">
        <text>guanosine(34) in tRNA + queuine = queuosine(34) in tRNA + guanine</text>
        <dbReference type="Rhea" id="RHEA:16633"/>
        <dbReference type="Rhea" id="RHEA-COMP:10341"/>
        <dbReference type="Rhea" id="RHEA-COMP:18571"/>
        <dbReference type="ChEBI" id="CHEBI:16235"/>
        <dbReference type="ChEBI" id="CHEBI:17433"/>
        <dbReference type="ChEBI" id="CHEBI:74269"/>
        <dbReference type="ChEBI" id="CHEBI:194431"/>
        <dbReference type="EC" id="2.4.2.64"/>
    </reaction>
</comment>
<comment type="cofactor">
    <cofactor evidence="1">
        <name>Zn(2+)</name>
        <dbReference type="ChEBI" id="CHEBI:29105"/>
    </cofactor>
</comment>
<comment type="subunit">
    <text evidence="1">Heterodimer of a catalytic subunit and an accessory subunit.</text>
</comment>
<comment type="subcellular location">
    <subcellularLocation>
        <location evidence="1">Cytoplasm</location>
    </subcellularLocation>
</comment>
<comment type="similarity">
    <text evidence="1">Belongs to the queuine tRNA-ribosyltransferase family.</text>
</comment>
<accession>A8X0P0</accession>
<gene>
    <name evidence="1" type="primary">tgt-1</name>
    <name type="ORF">CBG06200</name>
</gene>
<protein>
    <recommendedName>
        <fullName evidence="1">Queuine tRNA-ribosyltransferase catalytic subunit</fullName>
        <ecNumber evidence="1">2.4.2.64</ecNumber>
    </recommendedName>
    <alternativeName>
        <fullName evidence="1">Guanine insertion enzyme</fullName>
    </alternativeName>
    <alternativeName>
        <fullName evidence="1">tRNA-guanine transglycosylase</fullName>
    </alternativeName>
</protein>
<organism>
    <name type="scientific">Caenorhabditis briggsae</name>
    <dbReference type="NCBI Taxonomy" id="6238"/>
    <lineage>
        <taxon>Eukaryota</taxon>
        <taxon>Metazoa</taxon>
        <taxon>Ecdysozoa</taxon>
        <taxon>Nematoda</taxon>
        <taxon>Chromadorea</taxon>
        <taxon>Rhabditida</taxon>
        <taxon>Rhabditina</taxon>
        <taxon>Rhabditomorpha</taxon>
        <taxon>Rhabditoidea</taxon>
        <taxon>Rhabditidae</taxon>
        <taxon>Peloderinae</taxon>
        <taxon>Caenorhabditis</taxon>
    </lineage>
</organism>
<keyword id="KW-0963">Cytoplasm</keyword>
<keyword id="KW-0328">Glycosyltransferase</keyword>
<keyword id="KW-0479">Metal-binding</keyword>
<keyword id="KW-1185">Reference proteome</keyword>
<keyword id="KW-0808">Transferase</keyword>
<keyword id="KW-0819">tRNA processing</keyword>
<keyword id="KW-0862">Zinc</keyword>
<evidence type="ECO:0000255" key="1">
    <source>
        <dbReference type="HAMAP-Rule" id="MF_03218"/>
    </source>
</evidence>
<sequence>MKYDVLARAGFARRGNLHLPHSIVETPVFMPVGTQGTMKGVVTEQLVAMDCRILLCNTYHLGHRPGHERVKAAGGIHKMMNWNRSILTDSGGFQMVSLSKLMTVDENGVNFESPHTGEMMALPPEKSIEIQQALGADIMMQLDHVIHVLTTGDIVKEAMHRSIRWLDRCKVAHTRDDQAMFPILQGGLNLDLRKECAEEMAKRAKVGIAIGGLSGGEEKDHFWRVVAACCAALPPHLPRYVMGVGFPVDLVICSFLGADMFDCVYPTRTARFGTAMVRRGGLMQLNQKRYKEDFLPIDDKCKCNTCKNYTRAYIHSIAGKETVACHLVSIHNIKHQLDLMRDVRQAIQSNSVEKFLRQFLFDYYGPIQSENPSKQDTEKVQEVPQWVRDAVDHMGYTLDF</sequence>
<feature type="chain" id="PRO_0000383950" description="Queuine tRNA-ribosyltransferase catalytic subunit">
    <location>
        <begin position="1"/>
        <end position="400"/>
    </location>
</feature>
<feature type="region of interest" description="RNA binding" evidence="1">
    <location>
        <begin position="243"/>
        <end position="249"/>
    </location>
</feature>
<feature type="region of interest" description="RNA binding; important for wobble base 34 recognition" evidence="1">
    <location>
        <begin position="267"/>
        <end position="271"/>
    </location>
</feature>
<feature type="active site" description="Proton acceptor" evidence="1">
    <location>
        <position position="89"/>
    </location>
</feature>
<feature type="active site" description="Nucleophile" evidence="1">
    <location>
        <position position="262"/>
    </location>
</feature>
<feature type="binding site" evidence="1">
    <location>
        <begin position="89"/>
        <end position="93"/>
    </location>
    <ligand>
        <name>substrate</name>
    </ligand>
</feature>
<feature type="binding site" evidence="1">
    <location>
        <position position="143"/>
    </location>
    <ligand>
        <name>substrate</name>
    </ligand>
</feature>
<feature type="binding site" evidence="1">
    <location>
        <position position="185"/>
    </location>
    <ligand>
        <name>substrate</name>
    </ligand>
</feature>
<feature type="binding site" evidence="1">
    <location>
        <position position="212"/>
    </location>
    <ligand>
        <name>substrate</name>
    </ligand>
</feature>
<feature type="binding site" evidence="1">
    <location>
        <position position="301"/>
    </location>
    <ligand>
        <name>Zn(2+)</name>
        <dbReference type="ChEBI" id="CHEBI:29105"/>
    </ligand>
</feature>
<feature type="binding site" evidence="1">
    <location>
        <position position="303"/>
    </location>
    <ligand>
        <name>Zn(2+)</name>
        <dbReference type="ChEBI" id="CHEBI:29105"/>
    </ligand>
</feature>
<feature type="binding site" evidence="1">
    <location>
        <position position="306"/>
    </location>
    <ligand>
        <name>Zn(2+)</name>
        <dbReference type="ChEBI" id="CHEBI:29105"/>
    </ligand>
</feature>
<feature type="binding site" evidence="1">
    <location>
        <position position="331"/>
    </location>
    <ligand>
        <name>Zn(2+)</name>
        <dbReference type="ChEBI" id="CHEBI:29105"/>
    </ligand>
</feature>